<reference key="1">
    <citation type="journal article" date="2004" name="Nature">
        <title>Genome evolution in yeasts.</title>
        <authorList>
            <person name="Dujon B."/>
            <person name="Sherman D."/>
            <person name="Fischer G."/>
            <person name="Durrens P."/>
            <person name="Casaregola S."/>
            <person name="Lafontaine I."/>
            <person name="de Montigny J."/>
            <person name="Marck C."/>
            <person name="Neuveglise C."/>
            <person name="Talla E."/>
            <person name="Goffard N."/>
            <person name="Frangeul L."/>
            <person name="Aigle M."/>
            <person name="Anthouard V."/>
            <person name="Babour A."/>
            <person name="Barbe V."/>
            <person name="Barnay S."/>
            <person name="Blanchin S."/>
            <person name="Beckerich J.-M."/>
            <person name="Beyne E."/>
            <person name="Bleykasten C."/>
            <person name="Boisrame A."/>
            <person name="Boyer J."/>
            <person name="Cattolico L."/>
            <person name="Confanioleri F."/>
            <person name="de Daruvar A."/>
            <person name="Despons L."/>
            <person name="Fabre E."/>
            <person name="Fairhead C."/>
            <person name="Ferry-Dumazet H."/>
            <person name="Groppi A."/>
            <person name="Hantraye F."/>
            <person name="Hennequin C."/>
            <person name="Jauniaux N."/>
            <person name="Joyet P."/>
            <person name="Kachouri R."/>
            <person name="Kerrest A."/>
            <person name="Koszul R."/>
            <person name="Lemaire M."/>
            <person name="Lesur I."/>
            <person name="Ma L."/>
            <person name="Muller H."/>
            <person name="Nicaud J.-M."/>
            <person name="Nikolski M."/>
            <person name="Oztas S."/>
            <person name="Ozier-Kalogeropoulos O."/>
            <person name="Pellenz S."/>
            <person name="Potier S."/>
            <person name="Richard G.-F."/>
            <person name="Straub M.-L."/>
            <person name="Suleau A."/>
            <person name="Swennen D."/>
            <person name="Tekaia F."/>
            <person name="Wesolowski-Louvel M."/>
            <person name="Westhof E."/>
            <person name="Wirth B."/>
            <person name="Zeniou-Meyer M."/>
            <person name="Zivanovic Y."/>
            <person name="Bolotin-Fukuhara M."/>
            <person name="Thierry A."/>
            <person name="Bouchier C."/>
            <person name="Caudron B."/>
            <person name="Scarpelli C."/>
            <person name="Gaillardin C."/>
            <person name="Weissenbach J."/>
            <person name="Wincker P."/>
            <person name="Souciet J.-L."/>
        </authorList>
    </citation>
    <scope>NUCLEOTIDE SEQUENCE [LARGE SCALE GENOMIC DNA]</scope>
    <source>
        <strain>ATCC 2001 / BCRC 20586 / JCM 3761 / NBRC 0622 / NRRL Y-65 / CBS 138</strain>
    </source>
</reference>
<keyword id="KW-0963">Cytoplasm</keyword>
<keyword id="KW-1185">Reference proteome</keyword>
<keyword id="KW-0687">Ribonucleoprotein</keyword>
<keyword id="KW-0689">Ribosomal protein</keyword>
<comment type="subunit">
    <text evidence="1">Interacts with the 40S ribosomal subunit.</text>
</comment>
<comment type="subcellular location">
    <subcellularLocation>
        <location evidence="1">Cytoplasm</location>
    </subcellularLocation>
</comment>
<comment type="domain">
    <text>The SUI1 domain may be involved in RNA binding.</text>
</comment>
<comment type="similarity">
    <text evidence="3">Belongs to the DENR family.</text>
</comment>
<gene>
    <name type="primary">TMA22</name>
    <name type="ordered locus">CAGL0B03927g</name>
</gene>
<sequence>MLKEVVYCGVCTYPIDYCEFSGKLKRCKVWLKENHADLYDKLYSEDDAAAASLSAKLAESSIGEAREEKLEKDLQKLQTKQENKEQRELAKKLSSKVIVKREARTKRKYIVAISGLEVFEIDMKKLAKTFASKFATGCSVSKNAEKKEEVVVQGDVLDEVVAYIHSLLEEKGMKDVKVETIDTKKKKKPEATPAAK</sequence>
<protein>
    <recommendedName>
        <fullName>Translation machinery-associated protein 22</fullName>
    </recommendedName>
</protein>
<feature type="chain" id="PRO_0000320438" description="Translation machinery-associated protein 22">
    <location>
        <begin position="1"/>
        <end position="196"/>
    </location>
</feature>
<feature type="domain" description="SUI1" evidence="2">
    <location>
        <begin position="97"/>
        <end position="168"/>
    </location>
</feature>
<evidence type="ECO:0000250" key="1"/>
<evidence type="ECO:0000255" key="2">
    <source>
        <dbReference type="PROSITE-ProRule" id="PRU00200"/>
    </source>
</evidence>
<evidence type="ECO:0000305" key="3"/>
<organism>
    <name type="scientific">Candida glabrata (strain ATCC 2001 / BCRC 20586 / JCM 3761 / NBRC 0622 / NRRL Y-65 / CBS 138)</name>
    <name type="common">Yeast</name>
    <name type="synonym">Nakaseomyces glabratus</name>
    <dbReference type="NCBI Taxonomy" id="284593"/>
    <lineage>
        <taxon>Eukaryota</taxon>
        <taxon>Fungi</taxon>
        <taxon>Dikarya</taxon>
        <taxon>Ascomycota</taxon>
        <taxon>Saccharomycotina</taxon>
        <taxon>Saccharomycetes</taxon>
        <taxon>Saccharomycetales</taxon>
        <taxon>Saccharomycetaceae</taxon>
        <taxon>Nakaseomyces</taxon>
    </lineage>
</organism>
<proteinExistence type="inferred from homology"/>
<dbReference type="EMBL" id="CR380948">
    <property type="protein sequence ID" value="CAG58041.1"/>
    <property type="molecule type" value="Genomic_DNA"/>
</dbReference>
<dbReference type="RefSeq" id="XP_445141.1">
    <property type="nucleotide sequence ID" value="XM_445141.1"/>
</dbReference>
<dbReference type="SMR" id="Q6FXQ4"/>
<dbReference type="FunCoup" id="Q6FXQ4">
    <property type="interactions" value="1264"/>
</dbReference>
<dbReference type="STRING" id="284593.Q6FXQ4"/>
<dbReference type="EnsemblFungi" id="CAGL0B03927g-T">
    <property type="protein sequence ID" value="CAGL0B03927g-T-p1"/>
    <property type="gene ID" value="CAGL0B03927g"/>
</dbReference>
<dbReference type="KEGG" id="cgr:2886519"/>
<dbReference type="CGD" id="CAL0126992">
    <property type="gene designation" value="CAGL0B03927g"/>
</dbReference>
<dbReference type="VEuPathDB" id="FungiDB:B1J91_B03927g"/>
<dbReference type="VEuPathDB" id="FungiDB:CAGL0B03927g"/>
<dbReference type="eggNOG" id="KOG3239">
    <property type="taxonomic scope" value="Eukaryota"/>
</dbReference>
<dbReference type="HOGENOM" id="CLU_073511_0_1_1"/>
<dbReference type="InParanoid" id="Q6FXQ4"/>
<dbReference type="OMA" id="EVFEIDM"/>
<dbReference type="Proteomes" id="UP000002428">
    <property type="component" value="Chromosome B"/>
</dbReference>
<dbReference type="GO" id="GO:0005737">
    <property type="term" value="C:cytoplasm"/>
    <property type="evidence" value="ECO:0007669"/>
    <property type="project" value="UniProtKB-SubCell"/>
</dbReference>
<dbReference type="GO" id="GO:1990904">
    <property type="term" value="C:ribonucleoprotein complex"/>
    <property type="evidence" value="ECO:0007669"/>
    <property type="project" value="UniProtKB-KW"/>
</dbReference>
<dbReference type="GO" id="GO:0005840">
    <property type="term" value="C:ribosome"/>
    <property type="evidence" value="ECO:0007669"/>
    <property type="project" value="UniProtKB-KW"/>
</dbReference>
<dbReference type="GO" id="GO:0003729">
    <property type="term" value="F:mRNA binding"/>
    <property type="evidence" value="ECO:0007669"/>
    <property type="project" value="TreeGrafter"/>
</dbReference>
<dbReference type="GO" id="GO:0003743">
    <property type="term" value="F:translation initiation factor activity"/>
    <property type="evidence" value="ECO:0007669"/>
    <property type="project" value="InterPro"/>
</dbReference>
<dbReference type="GO" id="GO:0001731">
    <property type="term" value="P:formation of translation preinitiation complex"/>
    <property type="evidence" value="ECO:0007669"/>
    <property type="project" value="TreeGrafter"/>
</dbReference>
<dbReference type="GO" id="GO:0000184">
    <property type="term" value="P:nuclear-transcribed mRNA catabolic process, nonsense-mediated decay"/>
    <property type="evidence" value="ECO:0007669"/>
    <property type="project" value="EnsemblFungi"/>
</dbReference>
<dbReference type="GO" id="GO:0032790">
    <property type="term" value="P:ribosome disassembly"/>
    <property type="evidence" value="ECO:0007669"/>
    <property type="project" value="EnsemblFungi"/>
</dbReference>
<dbReference type="GO" id="GO:0002188">
    <property type="term" value="P:translation reinitiation"/>
    <property type="evidence" value="ECO:0007669"/>
    <property type="project" value="TreeGrafter"/>
</dbReference>
<dbReference type="CDD" id="cd11607">
    <property type="entry name" value="DENR_C"/>
    <property type="match status" value="1"/>
</dbReference>
<dbReference type="FunFam" id="3.30.780.10:FF:000013">
    <property type="entry name" value="Translation machinery-associated protein 22"/>
    <property type="match status" value="1"/>
</dbReference>
<dbReference type="Gene3D" id="3.30.780.10">
    <property type="entry name" value="SUI1-like domain"/>
    <property type="match status" value="1"/>
</dbReference>
<dbReference type="InterPro" id="IPR050318">
    <property type="entry name" value="DENR/SUI1_TIF"/>
</dbReference>
<dbReference type="InterPro" id="IPR046447">
    <property type="entry name" value="DENR_C"/>
</dbReference>
<dbReference type="InterPro" id="IPR005873">
    <property type="entry name" value="DENR_eukaryotes"/>
</dbReference>
<dbReference type="InterPro" id="IPR048517">
    <property type="entry name" value="DENR_N"/>
</dbReference>
<dbReference type="InterPro" id="IPR001950">
    <property type="entry name" value="SUI1"/>
</dbReference>
<dbReference type="InterPro" id="IPR036877">
    <property type="entry name" value="SUI1_dom_sf"/>
</dbReference>
<dbReference type="NCBIfam" id="TIGR01159">
    <property type="entry name" value="DRP1"/>
    <property type="match status" value="1"/>
</dbReference>
<dbReference type="PANTHER" id="PTHR12789:SF0">
    <property type="entry name" value="DENSITY-REGULATED PROTEIN"/>
    <property type="match status" value="1"/>
</dbReference>
<dbReference type="PANTHER" id="PTHR12789">
    <property type="entry name" value="DENSITY-REGULATED PROTEIN HOMOLOG"/>
    <property type="match status" value="1"/>
</dbReference>
<dbReference type="Pfam" id="PF21023">
    <property type="entry name" value="DENR_N"/>
    <property type="match status" value="1"/>
</dbReference>
<dbReference type="Pfam" id="PF01253">
    <property type="entry name" value="SUI1"/>
    <property type="match status" value="1"/>
</dbReference>
<dbReference type="SUPFAM" id="SSF55159">
    <property type="entry name" value="eIF1-like"/>
    <property type="match status" value="1"/>
</dbReference>
<dbReference type="PROSITE" id="PS50296">
    <property type="entry name" value="SUI1"/>
    <property type="match status" value="1"/>
</dbReference>
<name>DENR_CANGA</name>
<accession>Q6FXQ4</accession>